<protein>
    <recommendedName>
        <fullName evidence="1">Probable L-aspartate decarboxylase</fullName>
        <shortName evidence="1">ADC</shortName>
        <ecNumber evidence="1">4.1.1.11</ecNumber>
    </recommendedName>
</protein>
<feature type="chain" id="PRO_0000147029" description="Probable L-aspartate decarboxylase">
    <location>
        <begin position="1"/>
        <end position="371"/>
    </location>
</feature>
<feature type="modified residue" description="N6-(pyridoxal phosphate)lysine" evidence="1">
    <location>
        <position position="232"/>
    </location>
</feature>
<evidence type="ECO:0000255" key="1">
    <source>
        <dbReference type="HAMAP-Rule" id="MF_01610"/>
    </source>
</evidence>
<keyword id="KW-0210">Decarboxylase</keyword>
<keyword id="KW-0456">Lyase</keyword>
<keyword id="KW-0663">Pyridoxal phosphate</keyword>
<keyword id="KW-1185">Reference proteome</keyword>
<reference key="1">
    <citation type="journal article" date="1999" name="Genetics">
        <title>Divergence of the hyperthermophilic archaea Pyrococcus furiosus and P. horikoshii inferred from complete genomic sequences.</title>
        <authorList>
            <person name="Maeder D.L."/>
            <person name="Weiss R.B."/>
            <person name="Dunn D.M."/>
            <person name="Cherry J.L."/>
            <person name="Gonzalez J.M."/>
            <person name="DiRuggiero J."/>
            <person name="Robb F.T."/>
        </authorList>
    </citation>
    <scope>NUCLEOTIDE SEQUENCE [LARGE SCALE GENOMIC DNA]</scope>
    <source>
        <strain>ATCC 43587 / DSM 3638 / JCM 8422 / Vc1</strain>
    </source>
</reference>
<comment type="function">
    <text evidence="1">Catalyzes the decarboxylation of L-aspartate to produce beta-alanine.</text>
</comment>
<comment type="catalytic activity">
    <reaction evidence="1">
        <text>L-aspartate + H(+) = beta-alanine + CO2</text>
        <dbReference type="Rhea" id="RHEA:19497"/>
        <dbReference type="ChEBI" id="CHEBI:15378"/>
        <dbReference type="ChEBI" id="CHEBI:16526"/>
        <dbReference type="ChEBI" id="CHEBI:29991"/>
        <dbReference type="ChEBI" id="CHEBI:57966"/>
        <dbReference type="EC" id="4.1.1.11"/>
    </reaction>
</comment>
<comment type="cofactor">
    <cofactor evidence="1">
        <name>pyridoxal 5'-phosphate</name>
        <dbReference type="ChEBI" id="CHEBI:597326"/>
    </cofactor>
</comment>
<comment type="pathway">
    <text evidence="1">Cofactor biosynthesis; coenzyme A biosynthesis.</text>
</comment>
<comment type="similarity">
    <text evidence="1">Belongs to the group II decarboxylase family. MfnA subfamily.</text>
</comment>
<organism>
    <name type="scientific">Pyrococcus furiosus (strain ATCC 43587 / DSM 3638 / JCM 8422 / Vc1)</name>
    <dbReference type="NCBI Taxonomy" id="186497"/>
    <lineage>
        <taxon>Archaea</taxon>
        <taxon>Methanobacteriati</taxon>
        <taxon>Methanobacteriota</taxon>
        <taxon>Thermococci</taxon>
        <taxon>Thermococcales</taxon>
        <taxon>Thermococcaceae</taxon>
        <taxon>Pyrococcus</taxon>
    </lineage>
</organism>
<proteinExistence type="inferred from homology"/>
<accession>Q8U1P6</accession>
<dbReference type="EC" id="4.1.1.11" evidence="1"/>
<dbReference type="EMBL" id="AE009950">
    <property type="protein sequence ID" value="AAL81283.1"/>
    <property type="molecule type" value="Genomic_DNA"/>
</dbReference>
<dbReference type="SMR" id="Q8U1P6"/>
<dbReference type="STRING" id="186497.PF1159"/>
<dbReference type="PaxDb" id="186497-PF1159"/>
<dbReference type="KEGG" id="pfu:PF1159"/>
<dbReference type="PATRIC" id="fig|186497.12.peg.1220"/>
<dbReference type="eggNOG" id="arCOG00027">
    <property type="taxonomic scope" value="Archaea"/>
</dbReference>
<dbReference type="HOGENOM" id="CLU_028929_2_1_2"/>
<dbReference type="OrthoDB" id="56891at2157"/>
<dbReference type="PhylomeDB" id="Q8U1P6"/>
<dbReference type="BRENDA" id="4.1.1.11">
    <property type="organism ID" value="5243"/>
</dbReference>
<dbReference type="BRENDA" id="4.1.1.15">
    <property type="organism ID" value="5243"/>
</dbReference>
<dbReference type="BRENDA" id="4.1.1.25">
    <property type="organism ID" value="5243"/>
</dbReference>
<dbReference type="UniPathway" id="UPA00241"/>
<dbReference type="Proteomes" id="UP000001013">
    <property type="component" value="Chromosome"/>
</dbReference>
<dbReference type="GO" id="GO:0004068">
    <property type="term" value="F:aspartate 1-decarboxylase activity"/>
    <property type="evidence" value="ECO:0007669"/>
    <property type="project" value="UniProtKB-UniRule"/>
</dbReference>
<dbReference type="GO" id="GO:0030170">
    <property type="term" value="F:pyridoxal phosphate binding"/>
    <property type="evidence" value="ECO:0007669"/>
    <property type="project" value="UniProtKB-UniRule"/>
</dbReference>
<dbReference type="GO" id="GO:0019752">
    <property type="term" value="P:carboxylic acid metabolic process"/>
    <property type="evidence" value="ECO:0007669"/>
    <property type="project" value="InterPro"/>
</dbReference>
<dbReference type="GO" id="GO:0015937">
    <property type="term" value="P:coenzyme A biosynthetic process"/>
    <property type="evidence" value="ECO:0007669"/>
    <property type="project" value="UniProtKB-UniRule"/>
</dbReference>
<dbReference type="FunFam" id="3.40.640.10:FF:000125">
    <property type="entry name" value="Probable L-tyrosine/L-aspartate decarboxylase"/>
    <property type="match status" value="1"/>
</dbReference>
<dbReference type="Gene3D" id="3.90.1150.10">
    <property type="entry name" value="Aspartate Aminotransferase, domain 1"/>
    <property type="match status" value="1"/>
</dbReference>
<dbReference type="Gene3D" id="3.40.640.10">
    <property type="entry name" value="Type I PLP-dependent aspartate aminotransferase-like (Major domain)"/>
    <property type="match status" value="1"/>
</dbReference>
<dbReference type="HAMAP" id="MF_01610">
    <property type="entry name" value="MfnA_decarbox"/>
    <property type="match status" value="1"/>
</dbReference>
<dbReference type="InterPro" id="IPR050477">
    <property type="entry name" value="GrpII_AminoAcid_Decarb"/>
</dbReference>
<dbReference type="InterPro" id="IPR020931">
    <property type="entry name" value="MfnA"/>
</dbReference>
<dbReference type="InterPro" id="IPR002129">
    <property type="entry name" value="PyrdxlP-dep_de-COase"/>
</dbReference>
<dbReference type="InterPro" id="IPR015424">
    <property type="entry name" value="PyrdxlP-dep_Trfase"/>
</dbReference>
<dbReference type="InterPro" id="IPR015421">
    <property type="entry name" value="PyrdxlP-dep_Trfase_major"/>
</dbReference>
<dbReference type="InterPro" id="IPR015422">
    <property type="entry name" value="PyrdxlP-dep_Trfase_small"/>
</dbReference>
<dbReference type="InterPro" id="IPR021115">
    <property type="entry name" value="Pyridoxal-P_BS"/>
</dbReference>
<dbReference type="NCBIfam" id="TIGR03812">
    <property type="entry name" value="tyr_de_CO2_Arch"/>
    <property type="match status" value="1"/>
</dbReference>
<dbReference type="PANTHER" id="PTHR42735">
    <property type="match status" value="1"/>
</dbReference>
<dbReference type="PANTHER" id="PTHR42735:SF6">
    <property type="entry name" value="SPHINGOSINE-1-PHOSPHATE LYASE 1"/>
    <property type="match status" value="1"/>
</dbReference>
<dbReference type="Pfam" id="PF00282">
    <property type="entry name" value="Pyridoxal_deC"/>
    <property type="match status" value="1"/>
</dbReference>
<dbReference type="SUPFAM" id="SSF53383">
    <property type="entry name" value="PLP-dependent transferases"/>
    <property type="match status" value="1"/>
</dbReference>
<dbReference type="PROSITE" id="PS00392">
    <property type="entry name" value="DDC_GAD_HDC_YDC"/>
    <property type="match status" value="1"/>
</dbReference>
<gene>
    <name evidence="1" type="primary">mfnA</name>
    <name type="ordered locus">PF1159</name>
</gene>
<name>MFNA_PYRFU</name>
<sequence length="371" mass="40996">MKFPRKGIPQEEVMRELEKYTSKDLSFSSGKILGSMCTLPHELAKEVFCMYMDRNLGDPGLHPGTKKIEEEVIEMLSDLLHLERGYGHIVSGGTEANILAVRAFRNLADVENPELILPKSAHFSFIKAGEMLGVKLIWADLNPDYTVDVKDVEAKISENTIGIVGIAGTTGLGVVDDIPALSDLARDYGIPLHVDAAFGGFVIPFAKELGYDLPDFDFKLKGVQSITIDPHKMGMAPIPAGGIVFRHKKYLRAISVLAPYLAGGKIWQATITGTRPGASVLAVWALIKHLGFEGYMEIVDRAMKLSRWFAEEIKKTPGAWLVREPMLNIVSFKTKNLRRVERELKSRGWGISAHRGYIRIVSHASCDGGHD</sequence>